<protein>
    <recommendedName>
        <fullName>Thy-1 membrane glycoprotein</fullName>
    </recommendedName>
    <alternativeName>
        <fullName>CDw90</fullName>
    </alternativeName>
    <alternativeName>
        <fullName>Thy-1 antigen</fullName>
    </alternativeName>
    <cdAntigenName>CD90</cdAntigenName>
</protein>
<gene>
    <name type="primary">THY1</name>
</gene>
<feature type="signal peptide">
    <location>
        <begin position="1"/>
        <end position="19"/>
    </location>
</feature>
<feature type="chain" id="PRO_0000014973" description="Thy-1 membrane glycoprotein">
    <location>
        <begin position="20"/>
        <end position="130"/>
    </location>
</feature>
<feature type="propeptide" id="PRO_0000014974" description="Removed in mature form" evidence="1">
    <location>
        <begin position="131"/>
        <end position="161"/>
    </location>
</feature>
<feature type="domain" description="Ig-like V-type">
    <location>
        <begin position="20"/>
        <end position="126"/>
    </location>
</feature>
<feature type="modified residue" description="Pyrrolidone carboxylic acid" evidence="3">
    <location>
        <position position="20"/>
    </location>
</feature>
<feature type="modified residue" description="Phosphoserine" evidence="2">
    <location>
        <position position="82"/>
    </location>
</feature>
<feature type="lipid moiety-binding region" description="GPI-anchor amidated cysteine; alternate" evidence="1">
    <location>
        <position position="130"/>
    </location>
</feature>
<feature type="glycosylation site" description="N-linked (GlcNAc...) asparagine" evidence="7">
    <location>
        <position position="42"/>
    </location>
</feature>
<feature type="glycosylation site" description="N-linked (GlcNAc...) asparagine" evidence="4">
    <location>
        <position position="79"/>
    </location>
</feature>
<feature type="glycosylation site" description="N-linked (GlcNAc...) asparagine" evidence="6 7">
    <location>
        <position position="119"/>
    </location>
</feature>
<feature type="glycosylation site" description="N-linked (GlcNAc...) asparagine">
    <location>
        <position position="139"/>
    </location>
</feature>
<feature type="disulfide bond" description="Alternate" evidence="5">
    <location>
        <begin position="28"/>
        <end position="130"/>
    </location>
</feature>
<feature type="disulfide bond" evidence="5">
    <location>
        <begin position="38"/>
        <end position="104"/>
    </location>
</feature>
<feature type="sequence conflict" description="In Ref. 5." evidence="8" ref="5">
    <original>LT</original>
    <variation>AP</variation>
    <location>
        <begin position="54"/>
        <end position="55"/>
    </location>
</feature>
<feature type="sequence conflict" description="In Ref. 1; AAA61180." evidence="8" ref="1">
    <original>N</original>
    <variation>H</variation>
    <location>
        <position position="85"/>
    </location>
</feature>
<sequence length="161" mass="17935">MNLAISIALLLTVLQVSRGQKVTSLTACLVDQSLRLDCRHENTSSSPIQYEFSLTRETKKHVLFGTVGVPEHTYRSRTNFTSKYNMKVLYLSAFTSKDEGTYTCALHHSGHSPPISSQNVTVLRDKLVKCEGISLLAQNTSWLLLLLLSLSLLQATDFMSL</sequence>
<evidence type="ECO:0000250" key="1"/>
<evidence type="ECO:0000250" key="2">
    <source>
        <dbReference type="UniProtKB" id="P01830"/>
    </source>
</evidence>
<evidence type="ECO:0000250" key="3">
    <source>
        <dbReference type="UniProtKB" id="P01831"/>
    </source>
</evidence>
<evidence type="ECO:0000255" key="4"/>
<evidence type="ECO:0000255" key="5">
    <source>
        <dbReference type="PROSITE-ProRule" id="PRU00114"/>
    </source>
</evidence>
<evidence type="ECO:0000269" key="6">
    <source>
    </source>
</evidence>
<evidence type="ECO:0000269" key="7">
    <source>
    </source>
</evidence>
<evidence type="ECO:0000305" key="8"/>
<name>THY1_HUMAN</name>
<reference key="1">
    <citation type="journal article" date="1985" name="Proc. Natl. Acad. Sci. U.S.A.">
        <title>The human Thy-1 gene: structure and chromosomal location.</title>
        <authorList>
            <person name="Seki T."/>
            <person name="Spurr N."/>
            <person name="Obata F."/>
            <person name="Goyert S."/>
            <person name="Goodfellow P."/>
            <person name="Silver J."/>
        </authorList>
    </citation>
    <scope>NUCLEOTIDE SEQUENCE [GENOMIC DNA]</scope>
</reference>
<reference key="2">
    <citation type="journal article" date="2000" name="Biochem. Biophys. Res. Commun.">
        <title>cDNA cloning by amplification of circularized first strand cDNAs reveals non-IRE-regulated iron-responsive mRNAs.</title>
        <authorList>
            <person name="Ye Z."/>
            <person name="Connor J.R."/>
        </authorList>
    </citation>
    <scope>NUCLEOTIDE SEQUENCE [MRNA]</scope>
    <source>
        <tissue>Brain</tissue>
    </source>
</reference>
<reference key="3">
    <citation type="journal article" date="2007" name="BMC Genomics">
        <title>The full-ORF clone resource of the German cDNA consortium.</title>
        <authorList>
            <person name="Bechtel S."/>
            <person name="Rosenfelder H."/>
            <person name="Duda A."/>
            <person name="Schmidt C.P."/>
            <person name="Ernst U."/>
            <person name="Wellenreuther R."/>
            <person name="Mehrle A."/>
            <person name="Schuster C."/>
            <person name="Bahr A."/>
            <person name="Bloecker H."/>
            <person name="Heubner D."/>
            <person name="Hoerlein A."/>
            <person name="Michel G."/>
            <person name="Wedler H."/>
            <person name="Koehrer K."/>
            <person name="Ottenwaelder B."/>
            <person name="Poustka A."/>
            <person name="Wiemann S."/>
            <person name="Schupp I."/>
        </authorList>
    </citation>
    <scope>NUCLEOTIDE SEQUENCE [LARGE SCALE MRNA]</scope>
    <source>
        <tissue>Amygdala</tissue>
    </source>
</reference>
<reference key="4">
    <citation type="journal article" date="2004" name="Genome Res.">
        <title>The status, quality, and expansion of the NIH full-length cDNA project: the Mammalian Gene Collection (MGC).</title>
        <authorList>
            <consortium name="The MGC Project Team"/>
        </authorList>
    </citation>
    <scope>NUCLEOTIDE SEQUENCE [LARGE SCALE MRNA]</scope>
    <source>
        <tissue>Eye</tissue>
    </source>
</reference>
<reference key="5">
    <citation type="journal article" date="1993" name="J. Exp. Med.">
        <title>Expression of Thy-1 on human hematopoietic progenitor cells.</title>
        <authorList>
            <person name="Craig W."/>
            <person name="Kay R."/>
            <person name="Cutler R.L."/>
            <person name="Lansdorp P.M."/>
        </authorList>
    </citation>
    <scope>NUCLEOTIDE SEQUENCE [MRNA] OF 1-55</scope>
</reference>
<reference key="6">
    <citation type="journal article" date="2009" name="J. Proteome Res.">
        <title>Glycoproteomics analysis of human liver tissue by combination of multiple enzyme digestion and hydrazide chemistry.</title>
        <authorList>
            <person name="Chen R."/>
            <person name="Jiang X."/>
            <person name="Sun D."/>
            <person name="Han G."/>
            <person name="Wang F."/>
            <person name="Ye M."/>
            <person name="Wang L."/>
            <person name="Zou H."/>
        </authorList>
    </citation>
    <scope>GLYCOSYLATION [LARGE SCALE ANALYSIS] AT ASN-119</scope>
    <source>
        <tissue>Liver</tissue>
    </source>
</reference>
<reference key="7">
    <citation type="journal article" date="2009" name="Nat. Biotechnol.">
        <title>Mass-spectrometric identification and relative quantification of N-linked cell surface glycoproteins.</title>
        <authorList>
            <person name="Wollscheid B."/>
            <person name="Bausch-Fluck D."/>
            <person name="Henderson C."/>
            <person name="O'Brien R."/>
            <person name="Bibel M."/>
            <person name="Schiess R."/>
            <person name="Aebersold R."/>
            <person name="Watts J.D."/>
        </authorList>
    </citation>
    <scope>GLYCOSYLATION [LARGE SCALE ANALYSIS] AT ASN-42 AND ASN-119</scope>
    <source>
        <tissue>Leukemic T-cell</tissue>
    </source>
</reference>
<proteinExistence type="evidence at protein level"/>
<dbReference type="EMBL" id="M11749">
    <property type="protein sequence ID" value="AAA61180.1"/>
    <property type="molecule type" value="Genomic_DNA"/>
</dbReference>
<dbReference type="EMBL" id="AF261093">
    <property type="protein sequence ID" value="AAG13904.1"/>
    <property type="molecule type" value="mRNA"/>
</dbReference>
<dbReference type="EMBL" id="AL161958">
    <property type="protein sequence ID" value="CAB82306.1"/>
    <property type="molecule type" value="mRNA"/>
</dbReference>
<dbReference type="EMBL" id="BC065559">
    <property type="protein sequence ID" value="AAH65559.1"/>
    <property type="molecule type" value="mRNA"/>
</dbReference>
<dbReference type="EMBL" id="S59749">
    <property type="protein sequence ID" value="AAB26353.2"/>
    <property type="molecule type" value="mRNA"/>
</dbReference>
<dbReference type="CCDS" id="CCDS8424.1"/>
<dbReference type="PIR" id="A02106">
    <property type="entry name" value="TDHU"/>
</dbReference>
<dbReference type="PIR" id="T47130">
    <property type="entry name" value="T47130"/>
</dbReference>
<dbReference type="RefSeq" id="NP_001298089.1">
    <property type="nucleotide sequence ID" value="NM_001311160.2"/>
</dbReference>
<dbReference type="RefSeq" id="NP_001298091.1">
    <property type="nucleotide sequence ID" value="NM_001311162.2"/>
</dbReference>
<dbReference type="RefSeq" id="NP_006279.2">
    <property type="nucleotide sequence ID" value="NM_006288.4"/>
</dbReference>
<dbReference type="SMR" id="P04216"/>
<dbReference type="BioGRID" id="112926">
    <property type="interactions" value="45"/>
</dbReference>
<dbReference type="FunCoup" id="P04216">
    <property type="interactions" value="315"/>
</dbReference>
<dbReference type="IntAct" id="P04216">
    <property type="interactions" value="20"/>
</dbReference>
<dbReference type="MINT" id="P04216"/>
<dbReference type="STRING" id="9606.ENSP00000284240"/>
<dbReference type="GlyConnect" id="1808">
    <property type="glycosylation" value="3 N-Linked glycans (3 sites)"/>
</dbReference>
<dbReference type="GlyCosmos" id="P04216">
    <property type="glycosylation" value="4 sites, 2 glycans"/>
</dbReference>
<dbReference type="GlyGen" id="P04216">
    <property type="glycosylation" value="5 sites, 65 N-linked glycans (3 sites), 1 O-linked glycan (1 site)"/>
</dbReference>
<dbReference type="iPTMnet" id="P04216"/>
<dbReference type="PhosphoSitePlus" id="P04216"/>
<dbReference type="SwissPalm" id="P04216"/>
<dbReference type="BioMuta" id="THY1"/>
<dbReference type="DMDM" id="20455514"/>
<dbReference type="CPTAC" id="CPTAC-1511"/>
<dbReference type="jPOST" id="P04216"/>
<dbReference type="MassIVE" id="P04216"/>
<dbReference type="PaxDb" id="9606-ENSP00000284240"/>
<dbReference type="PeptideAtlas" id="P04216"/>
<dbReference type="ProteomicsDB" id="51683"/>
<dbReference type="Pumba" id="P04216"/>
<dbReference type="ABCD" id="P04216">
    <property type="antibodies" value="3 sequenced antibodies"/>
</dbReference>
<dbReference type="Antibodypedia" id="671">
    <property type="antibodies" value="2207 antibodies from 49 providers"/>
</dbReference>
<dbReference type="DNASU" id="7070"/>
<dbReference type="Ensembl" id="ENST00000284240.10">
    <property type="protein sequence ID" value="ENSP00000284240.6"/>
    <property type="gene ID" value="ENSG00000154096.14"/>
</dbReference>
<dbReference type="Ensembl" id="ENST00000528522.5">
    <property type="protein sequence ID" value="ENSP00000431301.1"/>
    <property type="gene ID" value="ENSG00000154096.14"/>
</dbReference>
<dbReference type="GeneID" id="7070"/>
<dbReference type="KEGG" id="hsa:7070"/>
<dbReference type="MANE-Select" id="ENST00000284240.10">
    <property type="protein sequence ID" value="ENSP00000284240.6"/>
    <property type="RefSeq nucleotide sequence ID" value="NM_006288.5"/>
    <property type="RefSeq protein sequence ID" value="NP_006279.2"/>
</dbReference>
<dbReference type="UCSC" id="uc001pwr.4">
    <property type="organism name" value="human"/>
</dbReference>
<dbReference type="AGR" id="HGNC:11801"/>
<dbReference type="CTD" id="7070"/>
<dbReference type="DisGeNET" id="7070"/>
<dbReference type="GeneCards" id="THY1"/>
<dbReference type="HGNC" id="HGNC:11801">
    <property type="gene designation" value="THY1"/>
</dbReference>
<dbReference type="HPA" id="ENSG00000154096">
    <property type="expression patterns" value="Tissue enhanced (brain, smooth muscle)"/>
</dbReference>
<dbReference type="MIM" id="188230">
    <property type="type" value="gene"/>
</dbReference>
<dbReference type="neXtProt" id="NX_P04216"/>
<dbReference type="OpenTargets" id="ENSG00000154096"/>
<dbReference type="PharmGKB" id="PA36510"/>
<dbReference type="VEuPathDB" id="HostDB:ENSG00000154096"/>
<dbReference type="eggNOG" id="ENOG502S18P">
    <property type="taxonomic scope" value="Eukaryota"/>
</dbReference>
<dbReference type="GeneTree" id="ENSGT00390000012352"/>
<dbReference type="HOGENOM" id="CLU_136861_0_0_1"/>
<dbReference type="InParanoid" id="P04216"/>
<dbReference type="OMA" id="MNPAIGI"/>
<dbReference type="OrthoDB" id="8396829at2759"/>
<dbReference type="PAN-GO" id="P04216">
    <property type="GO annotations" value="18 GO annotations based on evolutionary models"/>
</dbReference>
<dbReference type="PhylomeDB" id="P04216"/>
<dbReference type="TreeFam" id="TF336059"/>
<dbReference type="PathwayCommons" id="P04216"/>
<dbReference type="Reactome" id="R-HSA-163125">
    <property type="pathway name" value="Post-translational modification: synthesis of GPI-anchored proteins"/>
</dbReference>
<dbReference type="SignaLink" id="P04216"/>
<dbReference type="SIGNOR" id="P04216"/>
<dbReference type="BioGRID-ORCS" id="7070">
    <property type="hits" value="9 hits in 1152 CRISPR screens"/>
</dbReference>
<dbReference type="ChiTaRS" id="THY1">
    <property type="organism name" value="human"/>
</dbReference>
<dbReference type="GeneWiki" id="CD90"/>
<dbReference type="GenomeRNAi" id="7070"/>
<dbReference type="Pharos" id="P04216">
    <property type="development level" value="Tbio"/>
</dbReference>
<dbReference type="PRO" id="PR:P04216"/>
<dbReference type="Proteomes" id="UP000005640">
    <property type="component" value="Chromosome 11"/>
</dbReference>
<dbReference type="RNAct" id="P04216">
    <property type="molecule type" value="protein"/>
</dbReference>
<dbReference type="Bgee" id="ENSG00000154096">
    <property type="expression patterns" value="Expressed in prefrontal cortex and 190 other cell types or tissues"/>
</dbReference>
<dbReference type="ExpressionAtlas" id="P04216">
    <property type="expression patterns" value="baseline and differential"/>
</dbReference>
<dbReference type="GO" id="GO:0016324">
    <property type="term" value="C:apical plasma membrane"/>
    <property type="evidence" value="ECO:0000314"/>
    <property type="project" value="BHF-UCL"/>
</dbReference>
<dbReference type="GO" id="GO:0030673">
    <property type="term" value="C:axolemma"/>
    <property type="evidence" value="ECO:0000250"/>
    <property type="project" value="UniProtKB"/>
</dbReference>
<dbReference type="GO" id="GO:0009986">
    <property type="term" value="C:cell surface"/>
    <property type="evidence" value="ECO:0000314"/>
    <property type="project" value="UniProtKB"/>
</dbReference>
<dbReference type="GO" id="GO:0030425">
    <property type="term" value="C:dendrite"/>
    <property type="evidence" value="ECO:0000318"/>
    <property type="project" value="GO_Central"/>
</dbReference>
<dbReference type="GO" id="GO:0032590">
    <property type="term" value="C:dendrite membrane"/>
    <property type="evidence" value="ECO:0000250"/>
    <property type="project" value="UniProtKB"/>
</dbReference>
<dbReference type="GO" id="GO:0005783">
    <property type="term" value="C:endoplasmic reticulum"/>
    <property type="evidence" value="ECO:0000314"/>
    <property type="project" value="LIFEdb"/>
</dbReference>
<dbReference type="GO" id="GO:0009897">
    <property type="term" value="C:external side of plasma membrane"/>
    <property type="evidence" value="ECO:0000250"/>
    <property type="project" value="UniProtKB"/>
</dbReference>
<dbReference type="GO" id="GO:0070062">
    <property type="term" value="C:extracellular exosome"/>
    <property type="evidence" value="ECO:0007005"/>
    <property type="project" value="UniProtKB"/>
</dbReference>
<dbReference type="GO" id="GO:0005576">
    <property type="term" value="C:extracellular region"/>
    <property type="evidence" value="ECO:0000304"/>
    <property type="project" value="Reactome"/>
</dbReference>
<dbReference type="GO" id="GO:0005925">
    <property type="term" value="C:focal adhesion"/>
    <property type="evidence" value="ECO:0007005"/>
    <property type="project" value="UniProtKB"/>
</dbReference>
<dbReference type="GO" id="GO:0098978">
    <property type="term" value="C:glutamatergic synapse"/>
    <property type="evidence" value="ECO:0007669"/>
    <property type="project" value="Ensembl"/>
</dbReference>
<dbReference type="GO" id="GO:0030426">
    <property type="term" value="C:growth cone"/>
    <property type="evidence" value="ECO:0000250"/>
    <property type="project" value="UniProtKB"/>
</dbReference>
<dbReference type="GO" id="GO:0045121">
    <property type="term" value="C:membrane raft"/>
    <property type="evidence" value="ECO:0000318"/>
    <property type="project" value="GO_Central"/>
</dbReference>
<dbReference type="GO" id="GO:0032809">
    <property type="term" value="C:neuronal cell body membrane"/>
    <property type="evidence" value="ECO:0000250"/>
    <property type="project" value="UniProtKB"/>
</dbReference>
<dbReference type="GO" id="GO:0005886">
    <property type="term" value="C:plasma membrane"/>
    <property type="evidence" value="ECO:0000250"/>
    <property type="project" value="UniProtKB"/>
</dbReference>
<dbReference type="GO" id="GO:0098794">
    <property type="term" value="C:postsynapse"/>
    <property type="evidence" value="ECO:0007669"/>
    <property type="project" value="Ensembl"/>
</dbReference>
<dbReference type="GO" id="GO:0098793">
    <property type="term" value="C:presynapse"/>
    <property type="evidence" value="ECO:0007669"/>
    <property type="project" value="Ensembl"/>
</dbReference>
<dbReference type="GO" id="GO:0034235">
    <property type="term" value="F:GPI anchor binding"/>
    <property type="evidence" value="ECO:0000250"/>
    <property type="project" value="UniProtKB"/>
</dbReference>
<dbReference type="GO" id="GO:0005096">
    <property type="term" value="F:GTPase activator activity"/>
    <property type="evidence" value="ECO:0000250"/>
    <property type="project" value="UniProtKB"/>
</dbReference>
<dbReference type="GO" id="GO:0005178">
    <property type="term" value="F:integrin binding"/>
    <property type="evidence" value="ECO:0000315"/>
    <property type="project" value="UniProtKB"/>
</dbReference>
<dbReference type="GO" id="GO:0001525">
    <property type="term" value="P:angiogenesis"/>
    <property type="evidence" value="ECO:0000250"/>
    <property type="project" value="UniProtKB"/>
</dbReference>
<dbReference type="GO" id="GO:0098609">
    <property type="term" value="P:cell-cell adhesion"/>
    <property type="evidence" value="ECO:0000250"/>
    <property type="project" value="UniProtKB"/>
</dbReference>
<dbReference type="GO" id="GO:0007267">
    <property type="term" value="P:cell-cell signaling"/>
    <property type="evidence" value="ECO:0000250"/>
    <property type="project" value="UniProtKB"/>
</dbReference>
<dbReference type="GO" id="GO:0007010">
    <property type="term" value="P:cytoskeleton organization"/>
    <property type="evidence" value="ECO:0000250"/>
    <property type="project" value="UniProtKB"/>
</dbReference>
<dbReference type="GO" id="GO:0048041">
    <property type="term" value="P:focal adhesion assembly"/>
    <property type="evidence" value="ECO:0000250"/>
    <property type="project" value="UniProtKB"/>
</dbReference>
<dbReference type="GO" id="GO:0034113">
    <property type="term" value="P:heterotypic cell-cell adhesion"/>
    <property type="evidence" value="ECO:0000314"/>
    <property type="project" value="UniProtKB"/>
</dbReference>
<dbReference type="GO" id="GO:0007229">
    <property type="term" value="P:integrin-mediated signaling pathway"/>
    <property type="evidence" value="ECO:0000315"/>
    <property type="project" value="UniProtKB"/>
</dbReference>
<dbReference type="GO" id="GO:0050771">
    <property type="term" value="P:negative regulation of axonogenesis"/>
    <property type="evidence" value="ECO:0000250"/>
    <property type="project" value="UniProtKB"/>
</dbReference>
<dbReference type="GO" id="GO:0030336">
    <property type="term" value="P:negative regulation of cell migration"/>
    <property type="evidence" value="ECO:0000250"/>
    <property type="project" value="UniProtKB"/>
</dbReference>
<dbReference type="GO" id="GO:0070571">
    <property type="term" value="P:negative regulation of neuron projection regeneration"/>
    <property type="evidence" value="ECO:0000250"/>
    <property type="project" value="UniProtKB"/>
</dbReference>
<dbReference type="GO" id="GO:0006469">
    <property type="term" value="P:negative regulation of protein kinase activity"/>
    <property type="evidence" value="ECO:0000250"/>
    <property type="project" value="UniProtKB"/>
</dbReference>
<dbReference type="GO" id="GO:0050860">
    <property type="term" value="P:negative regulation of T cell receptor signaling pathway"/>
    <property type="evidence" value="ECO:0000250"/>
    <property type="project" value="UniProtKB"/>
</dbReference>
<dbReference type="GO" id="GO:0002693">
    <property type="term" value="P:positive regulation of cellular extravasation"/>
    <property type="evidence" value="ECO:0000314"/>
    <property type="project" value="UniProtKB"/>
</dbReference>
<dbReference type="GO" id="GO:0051894">
    <property type="term" value="P:positive regulation of focal adhesion assembly"/>
    <property type="evidence" value="ECO:0000315"/>
    <property type="project" value="UniProtKB"/>
</dbReference>
<dbReference type="GO" id="GO:0043547">
    <property type="term" value="P:positive regulation of GTPase activity"/>
    <property type="evidence" value="ECO:0000250"/>
    <property type="project" value="UniProtKB"/>
</dbReference>
<dbReference type="GO" id="GO:0051281">
    <property type="term" value="P:positive regulation of release of sequestered calcium ion into cytosol"/>
    <property type="evidence" value="ECO:0000250"/>
    <property type="project" value="UniProtKB"/>
</dbReference>
<dbReference type="GO" id="GO:0050870">
    <property type="term" value="P:positive regulation of T cell activation"/>
    <property type="evidence" value="ECO:0000250"/>
    <property type="project" value="UniProtKB"/>
</dbReference>
<dbReference type="GO" id="GO:0043113">
    <property type="term" value="P:receptor clustering"/>
    <property type="evidence" value="ECO:0000250"/>
    <property type="project" value="UniProtKB"/>
</dbReference>
<dbReference type="GO" id="GO:0001952">
    <property type="term" value="P:regulation of cell-matrix adhesion"/>
    <property type="evidence" value="ECO:0000315"/>
    <property type="project" value="UniProtKB"/>
</dbReference>
<dbReference type="GO" id="GO:2000298">
    <property type="term" value="P:regulation of Rho-dependent protein serine/threonine kinase activity"/>
    <property type="evidence" value="ECO:0000250"/>
    <property type="project" value="UniProtKB"/>
</dbReference>
<dbReference type="GO" id="GO:0046549">
    <property type="term" value="P:retinal cone cell development"/>
    <property type="evidence" value="ECO:0000250"/>
    <property type="project" value="UniProtKB"/>
</dbReference>
<dbReference type="GO" id="GO:0050852">
    <property type="term" value="P:T cell receptor signaling pathway"/>
    <property type="evidence" value="ECO:0000250"/>
    <property type="project" value="UniProtKB"/>
</dbReference>
<dbReference type="CDD" id="cd20948">
    <property type="entry name" value="IgC2_CEACAM5-like"/>
    <property type="match status" value="1"/>
</dbReference>
<dbReference type="FunFam" id="2.60.40.10:FF:001319">
    <property type="entry name" value="Thy-1 membrane glycoprotein"/>
    <property type="match status" value="1"/>
</dbReference>
<dbReference type="Gene3D" id="2.60.40.10">
    <property type="entry name" value="Immunoglobulins"/>
    <property type="match status" value="1"/>
</dbReference>
<dbReference type="InterPro" id="IPR007110">
    <property type="entry name" value="Ig-like_dom"/>
</dbReference>
<dbReference type="InterPro" id="IPR036179">
    <property type="entry name" value="Ig-like_dom_sf"/>
</dbReference>
<dbReference type="InterPro" id="IPR013783">
    <property type="entry name" value="Ig-like_fold"/>
</dbReference>
<dbReference type="InterPro" id="IPR013106">
    <property type="entry name" value="Ig_V-set"/>
</dbReference>
<dbReference type="InterPro" id="IPR013151">
    <property type="entry name" value="Immunoglobulin_dom"/>
</dbReference>
<dbReference type="InterPro" id="IPR033292">
    <property type="entry name" value="THY1"/>
</dbReference>
<dbReference type="PANTHER" id="PTHR19226">
    <property type="entry name" value="THY-1 MEMBRANE GLYCOPROTEIN"/>
    <property type="match status" value="1"/>
</dbReference>
<dbReference type="PANTHER" id="PTHR19226:SF2">
    <property type="entry name" value="THY-1 MEMBRANE GLYCOPROTEIN"/>
    <property type="match status" value="1"/>
</dbReference>
<dbReference type="Pfam" id="PF00047">
    <property type="entry name" value="ig"/>
    <property type="match status" value="1"/>
</dbReference>
<dbReference type="SMART" id="SM00406">
    <property type="entry name" value="IGv"/>
    <property type="match status" value="1"/>
</dbReference>
<dbReference type="SUPFAM" id="SSF48726">
    <property type="entry name" value="Immunoglobulin"/>
    <property type="match status" value="1"/>
</dbReference>
<dbReference type="PROSITE" id="PS50835">
    <property type="entry name" value="IG_LIKE"/>
    <property type="match status" value="1"/>
</dbReference>
<comment type="function">
    <text>May play a role in cell-cell or cell-ligand interactions during synaptogenesis and other events in the brain.</text>
</comment>
<comment type="interaction">
    <interactant intactId="EBI-9071715">
        <id>P04216</id>
    </interactant>
    <interactant intactId="EBI-77613">
        <id>P05067</id>
        <label>APP</label>
    </interactant>
    <organismsDiffer>false</organismsDiffer>
    <experiments>3</experiments>
</comment>
<comment type="subcellular location">
    <subcellularLocation>
        <location evidence="1">Cell membrane</location>
        <topology evidence="1">Lipid-anchor</topology>
        <topology evidence="1">GPI-anchor</topology>
    </subcellularLocation>
</comment>
<comment type="online information" name="Atlas of Genetics and Cytogenetics in Oncology and Haematology">
    <link uri="https://atlasgeneticsoncology.org/gene/45672/THY1"/>
</comment>
<organism>
    <name type="scientific">Homo sapiens</name>
    <name type="common">Human</name>
    <dbReference type="NCBI Taxonomy" id="9606"/>
    <lineage>
        <taxon>Eukaryota</taxon>
        <taxon>Metazoa</taxon>
        <taxon>Chordata</taxon>
        <taxon>Craniata</taxon>
        <taxon>Vertebrata</taxon>
        <taxon>Euteleostomi</taxon>
        <taxon>Mammalia</taxon>
        <taxon>Eutheria</taxon>
        <taxon>Euarchontoglires</taxon>
        <taxon>Primates</taxon>
        <taxon>Haplorrhini</taxon>
        <taxon>Catarrhini</taxon>
        <taxon>Hominidae</taxon>
        <taxon>Homo</taxon>
    </lineage>
</organism>
<keyword id="KW-1003">Cell membrane</keyword>
<keyword id="KW-1015">Disulfide bond</keyword>
<keyword id="KW-0325">Glycoprotein</keyword>
<keyword id="KW-0336">GPI-anchor</keyword>
<keyword id="KW-0393">Immunoglobulin domain</keyword>
<keyword id="KW-0449">Lipoprotein</keyword>
<keyword id="KW-0472">Membrane</keyword>
<keyword id="KW-0597">Phosphoprotein</keyword>
<keyword id="KW-1267">Proteomics identification</keyword>
<keyword id="KW-0873">Pyrrolidone carboxylic acid</keyword>
<keyword id="KW-1185">Reference proteome</keyword>
<keyword id="KW-0732">Signal</keyword>
<accession>P04216</accession>
<accession>Q16008</accession>
<accession>Q9NSP1</accession>